<organism>
    <name type="scientific">Natranaerobius thermophilus (strain ATCC BAA-1301 / DSM 18059 / JW/NM-WN-LF)</name>
    <dbReference type="NCBI Taxonomy" id="457570"/>
    <lineage>
        <taxon>Bacteria</taxon>
        <taxon>Bacillati</taxon>
        <taxon>Bacillota</taxon>
        <taxon>Clostridia</taxon>
        <taxon>Natranaerobiales</taxon>
        <taxon>Natranaerobiaceae</taxon>
        <taxon>Natranaerobius</taxon>
    </lineage>
</organism>
<evidence type="ECO:0000255" key="1">
    <source>
        <dbReference type="HAMAP-Rule" id="MF_01341"/>
    </source>
</evidence>
<evidence type="ECO:0000256" key="2">
    <source>
        <dbReference type="SAM" id="MobiDB-lite"/>
    </source>
</evidence>
<evidence type="ECO:0000305" key="3"/>
<sequence length="146" mass="16101">MRLHELRPKTNYKKSRKRKGRGMSSGLGKTAGRGHKGQNARTGGGVRPGFEGGQMPLQERLPKRGFTNAFKKEYAIVNVETLNDFEEGTEITPEVLLESKVIKGVKDGIKVLGKGEIDKKITVKAHKFSKQAKEKIEEAGGKVEVI</sequence>
<reference key="1">
    <citation type="submission" date="2008-04" db="EMBL/GenBank/DDBJ databases">
        <title>Complete sequence of chromosome of Natranaerobius thermophilus JW/NM-WN-LF.</title>
        <authorList>
            <consortium name="US DOE Joint Genome Institute"/>
            <person name="Copeland A."/>
            <person name="Lucas S."/>
            <person name="Lapidus A."/>
            <person name="Glavina del Rio T."/>
            <person name="Dalin E."/>
            <person name="Tice H."/>
            <person name="Bruce D."/>
            <person name="Goodwin L."/>
            <person name="Pitluck S."/>
            <person name="Chertkov O."/>
            <person name="Brettin T."/>
            <person name="Detter J.C."/>
            <person name="Han C."/>
            <person name="Kuske C.R."/>
            <person name="Schmutz J."/>
            <person name="Larimer F."/>
            <person name="Land M."/>
            <person name="Hauser L."/>
            <person name="Kyrpides N."/>
            <person name="Lykidis A."/>
            <person name="Mesbah N.M."/>
            <person name="Wiegel J."/>
        </authorList>
    </citation>
    <scope>NUCLEOTIDE SEQUENCE [LARGE SCALE GENOMIC DNA]</scope>
    <source>
        <strain>ATCC BAA-1301 / DSM 18059 / JW/NM-WN-LF</strain>
    </source>
</reference>
<comment type="function">
    <text evidence="1">Binds to the 23S rRNA.</text>
</comment>
<comment type="subunit">
    <text evidence="1">Part of the 50S ribosomal subunit.</text>
</comment>
<comment type="similarity">
    <text evidence="1">Belongs to the universal ribosomal protein uL15 family.</text>
</comment>
<accession>B2A4F8</accession>
<feature type="chain" id="PRO_1000142848" description="Large ribosomal subunit protein uL15">
    <location>
        <begin position="1"/>
        <end position="146"/>
    </location>
</feature>
<feature type="region of interest" description="Disordered" evidence="2">
    <location>
        <begin position="1"/>
        <end position="62"/>
    </location>
</feature>
<feature type="compositionally biased region" description="Basic residues" evidence="2">
    <location>
        <begin position="10"/>
        <end position="21"/>
    </location>
</feature>
<feature type="compositionally biased region" description="Gly residues" evidence="2">
    <location>
        <begin position="42"/>
        <end position="52"/>
    </location>
</feature>
<proteinExistence type="inferred from homology"/>
<protein>
    <recommendedName>
        <fullName evidence="1">Large ribosomal subunit protein uL15</fullName>
    </recommendedName>
    <alternativeName>
        <fullName evidence="3">50S ribosomal protein L15</fullName>
    </alternativeName>
</protein>
<name>RL15_NATTJ</name>
<keyword id="KW-1185">Reference proteome</keyword>
<keyword id="KW-0687">Ribonucleoprotein</keyword>
<keyword id="KW-0689">Ribosomal protein</keyword>
<keyword id="KW-0694">RNA-binding</keyword>
<keyword id="KW-0699">rRNA-binding</keyword>
<dbReference type="EMBL" id="CP001034">
    <property type="protein sequence ID" value="ACB83812.1"/>
    <property type="molecule type" value="Genomic_DNA"/>
</dbReference>
<dbReference type="RefSeq" id="WP_012446701.1">
    <property type="nucleotide sequence ID" value="NC_010718.1"/>
</dbReference>
<dbReference type="SMR" id="B2A4F8"/>
<dbReference type="FunCoup" id="B2A4F8">
    <property type="interactions" value="459"/>
</dbReference>
<dbReference type="STRING" id="457570.Nther_0213"/>
<dbReference type="KEGG" id="nth:Nther_0213"/>
<dbReference type="eggNOG" id="COG0200">
    <property type="taxonomic scope" value="Bacteria"/>
</dbReference>
<dbReference type="HOGENOM" id="CLU_055188_4_2_9"/>
<dbReference type="InParanoid" id="B2A4F8"/>
<dbReference type="OrthoDB" id="9810293at2"/>
<dbReference type="Proteomes" id="UP000001683">
    <property type="component" value="Chromosome"/>
</dbReference>
<dbReference type="GO" id="GO:0022625">
    <property type="term" value="C:cytosolic large ribosomal subunit"/>
    <property type="evidence" value="ECO:0007669"/>
    <property type="project" value="TreeGrafter"/>
</dbReference>
<dbReference type="GO" id="GO:0019843">
    <property type="term" value="F:rRNA binding"/>
    <property type="evidence" value="ECO:0007669"/>
    <property type="project" value="UniProtKB-UniRule"/>
</dbReference>
<dbReference type="GO" id="GO:0003735">
    <property type="term" value="F:structural constituent of ribosome"/>
    <property type="evidence" value="ECO:0007669"/>
    <property type="project" value="InterPro"/>
</dbReference>
<dbReference type="GO" id="GO:0006412">
    <property type="term" value="P:translation"/>
    <property type="evidence" value="ECO:0007669"/>
    <property type="project" value="UniProtKB-UniRule"/>
</dbReference>
<dbReference type="Gene3D" id="3.100.10.10">
    <property type="match status" value="1"/>
</dbReference>
<dbReference type="HAMAP" id="MF_01341">
    <property type="entry name" value="Ribosomal_uL15"/>
    <property type="match status" value="1"/>
</dbReference>
<dbReference type="InterPro" id="IPR030878">
    <property type="entry name" value="Ribosomal_uL15"/>
</dbReference>
<dbReference type="InterPro" id="IPR021131">
    <property type="entry name" value="Ribosomal_uL15/eL18"/>
</dbReference>
<dbReference type="InterPro" id="IPR036227">
    <property type="entry name" value="Ribosomal_uL15/eL18_sf"/>
</dbReference>
<dbReference type="InterPro" id="IPR005749">
    <property type="entry name" value="Ribosomal_uL15_bac-type"/>
</dbReference>
<dbReference type="InterPro" id="IPR001196">
    <property type="entry name" value="Ribosomal_uL15_CS"/>
</dbReference>
<dbReference type="NCBIfam" id="TIGR01071">
    <property type="entry name" value="rplO_bact"/>
    <property type="match status" value="1"/>
</dbReference>
<dbReference type="PANTHER" id="PTHR12934">
    <property type="entry name" value="50S RIBOSOMAL PROTEIN L15"/>
    <property type="match status" value="1"/>
</dbReference>
<dbReference type="PANTHER" id="PTHR12934:SF11">
    <property type="entry name" value="LARGE RIBOSOMAL SUBUNIT PROTEIN UL15M"/>
    <property type="match status" value="1"/>
</dbReference>
<dbReference type="Pfam" id="PF00828">
    <property type="entry name" value="Ribosomal_L27A"/>
    <property type="match status" value="1"/>
</dbReference>
<dbReference type="SUPFAM" id="SSF52080">
    <property type="entry name" value="Ribosomal proteins L15p and L18e"/>
    <property type="match status" value="1"/>
</dbReference>
<dbReference type="PROSITE" id="PS00475">
    <property type="entry name" value="RIBOSOMAL_L15"/>
    <property type="match status" value="1"/>
</dbReference>
<gene>
    <name evidence="1" type="primary">rplO</name>
    <name type="ordered locus">Nther_0213</name>
</gene>